<reference key="1">
    <citation type="journal article" date="1997" name="Nature">
        <title>The nucleotide sequence of Saccharomyces cerevisiae chromosome V.</title>
        <authorList>
            <person name="Dietrich F.S."/>
            <person name="Mulligan J.T."/>
            <person name="Hennessy K.M."/>
            <person name="Yelton M.A."/>
            <person name="Allen E."/>
            <person name="Araujo R."/>
            <person name="Aviles E."/>
            <person name="Berno A."/>
            <person name="Brennan T."/>
            <person name="Carpenter J."/>
            <person name="Chen E."/>
            <person name="Cherry J.M."/>
            <person name="Chung E."/>
            <person name="Duncan M."/>
            <person name="Guzman E."/>
            <person name="Hartzell G."/>
            <person name="Hunicke-Smith S."/>
            <person name="Hyman R.W."/>
            <person name="Kayser A."/>
            <person name="Komp C."/>
            <person name="Lashkari D."/>
            <person name="Lew H."/>
            <person name="Lin D."/>
            <person name="Mosedale D."/>
            <person name="Nakahara K."/>
            <person name="Namath A."/>
            <person name="Norgren R."/>
            <person name="Oefner P."/>
            <person name="Oh C."/>
            <person name="Petel F.X."/>
            <person name="Roberts D."/>
            <person name="Sehl P."/>
            <person name="Schramm S."/>
            <person name="Shogren T."/>
            <person name="Smith V."/>
            <person name="Taylor P."/>
            <person name="Wei Y."/>
            <person name="Botstein D."/>
            <person name="Davis R.W."/>
        </authorList>
    </citation>
    <scope>NUCLEOTIDE SEQUENCE [LARGE SCALE GENOMIC DNA]</scope>
    <source>
        <strain>ATCC 204508 / S288c</strain>
    </source>
</reference>
<reference key="2">
    <citation type="journal article" date="2014" name="G3 (Bethesda)">
        <title>The reference genome sequence of Saccharomyces cerevisiae: Then and now.</title>
        <authorList>
            <person name="Engel S.R."/>
            <person name="Dietrich F.S."/>
            <person name="Fisk D.G."/>
            <person name="Binkley G."/>
            <person name="Balakrishnan R."/>
            <person name="Costanzo M.C."/>
            <person name="Dwight S.S."/>
            <person name="Hitz B.C."/>
            <person name="Karra K."/>
            <person name="Nash R.S."/>
            <person name="Weng S."/>
            <person name="Wong E.D."/>
            <person name="Lloyd P."/>
            <person name="Skrzypek M.S."/>
            <person name="Miyasato S.R."/>
            <person name="Simison M."/>
            <person name="Cherry J.M."/>
        </authorList>
    </citation>
    <scope>GENOME REANNOTATION</scope>
    <source>
        <strain>ATCC 204508 / S288c</strain>
    </source>
</reference>
<reference key="3">
    <citation type="journal article" date="2007" name="Genome Res.">
        <title>Approaching a complete repository of sequence-verified protein-encoding clones for Saccharomyces cerevisiae.</title>
        <authorList>
            <person name="Hu Y."/>
            <person name="Rolfs A."/>
            <person name="Bhullar B."/>
            <person name="Murthy T.V.S."/>
            <person name="Zhu C."/>
            <person name="Berger M.F."/>
            <person name="Camargo A.A."/>
            <person name="Kelley F."/>
            <person name="McCarron S."/>
            <person name="Jepson D."/>
            <person name="Richardson A."/>
            <person name="Raphael J."/>
            <person name="Moreira D."/>
            <person name="Taycher E."/>
            <person name="Zuo D."/>
            <person name="Mohr S."/>
            <person name="Kane M.F."/>
            <person name="Williamson J."/>
            <person name="Simpson A.J.G."/>
            <person name="Bulyk M.L."/>
            <person name="Harlow E."/>
            <person name="Marsischky G."/>
            <person name="Kolodner R.D."/>
            <person name="LaBaer J."/>
        </authorList>
    </citation>
    <scope>NUCLEOTIDE SEQUENCE [GENOMIC DNA]</scope>
    <source>
        <strain>ATCC 204508 / S288c</strain>
    </source>
</reference>
<reference key="4">
    <citation type="journal article" date="2001" name="Mol. Cell">
        <title>Composition and functional characterization of yeast 66S ribosome assembly intermediates.</title>
        <authorList>
            <person name="Harnpicharnchai P."/>
            <person name="Jakovljevic J."/>
            <person name="Horsey E."/>
            <person name="Miles T."/>
            <person name="Roman J."/>
            <person name="Rout M."/>
            <person name="Meagher D."/>
            <person name="Imai B."/>
            <person name="Guo Y."/>
            <person name="Brame C.J."/>
            <person name="Shabanowitz J."/>
            <person name="Hunt D.F."/>
            <person name="Woolford J.L. Jr."/>
        </authorList>
    </citation>
    <scope>IDENTIFICATION IN THE PRE-66S RIBOSOMAL PARTICLE</scope>
    <scope>FUNCTION</scope>
    <scope>INTERACTION WITH NOP7</scope>
    <scope>IDENTIFICATION BY MASS SPECTROMETRY</scope>
</reference>
<reference key="5">
    <citation type="journal article" date="2003" name="Nature">
        <title>Global analysis of protein localization in budding yeast.</title>
        <authorList>
            <person name="Huh W.-K."/>
            <person name="Falvo J.V."/>
            <person name="Gerke L.C."/>
            <person name="Carroll A.S."/>
            <person name="Howson R.W."/>
            <person name="Weissman J.S."/>
            <person name="O'Shea E.K."/>
        </authorList>
    </citation>
    <scope>SUBCELLULAR LOCATION [LARGE SCALE ANALYSIS]</scope>
</reference>
<reference key="6">
    <citation type="journal article" date="2003" name="Nature">
        <title>Global analysis of protein expression in yeast.</title>
        <authorList>
            <person name="Ghaemmaghami S."/>
            <person name="Huh W.-K."/>
            <person name="Bower K."/>
            <person name="Howson R.W."/>
            <person name="Belle A."/>
            <person name="Dephoure N."/>
            <person name="O'Shea E.K."/>
            <person name="Weissman J.S."/>
        </authorList>
    </citation>
    <scope>LEVEL OF PROTEIN EXPRESSION [LARGE SCALE ANALYSIS]</scope>
</reference>
<reference key="7">
    <citation type="journal article" date="2004" name="RNA">
        <title>Role of the yeast Rrp1 protein in the dynamics of pre-ribosome maturation.</title>
        <authorList>
            <person name="Horsey E.W."/>
            <person name="Jakovljevic J."/>
            <person name="Miles T.D."/>
            <person name="Harnpicharnchai P."/>
            <person name="Woolford J.L. Jr."/>
        </authorList>
    </citation>
    <scope>IDENTIFICATION IN THE PRE-66S RIBOSOMAL PARTICLE</scope>
    <scope>INTERACTION WITH RRP1</scope>
    <scope>IDENTIFICATION BY MASS SPECTROMETRY</scope>
</reference>
<reference key="8">
    <citation type="journal article" date="2005" name="RNA">
        <title>Rrp15p, a novel component of pre-ribosomal particles required for 60S ribosome subunit maturation.</title>
        <authorList>
            <person name="De Marchis M.L."/>
            <person name="Giorgi A."/>
            <person name="Schinina M.E."/>
            <person name="Bozzoni I."/>
            <person name="Fatica A."/>
        </authorList>
    </citation>
    <scope>IDENTIFICATION IN THE PRE-66S RIBOSOMAL PARTICLE</scope>
    <scope>INTERACTION WITH RRP15</scope>
    <scope>IDENTIFICATION BY MASS SPECTROMETRY</scope>
</reference>
<reference key="9">
    <citation type="journal article" date="2007" name="Proc. Natl. Acad. Sci. U.S.A.">
        <title>Analysis of phosphorylation sites on proteins from Saccharomyces cerevisiae by electron transfer dissociation (ETD) mass spectrometry.</title>
        <authorList>
            <person name="Chi A."/>
            <person name="Huttenhower C."/>
            <person name="Geer L.Y."/>
            <person name="Coon J.J."/>
            <person name="Syka J.E.P."/>
            <person name="Bai D.L."/>
            <person name="Shabanowitz J."/>
            <person name="Burke D.J."/>
            <person name="Troyanskaya O.G."/>
            <person name="Hunt D.F."/>
        </authorList>
    </citation>
    <scope>PHOSPHORYLATION [LARGE SCALE ANALYSIS] AT SER-176 AND SER-178</scope>
    <scope>IDENTIFICATION BY MASS SPECTROMETRY [LARGE SCALE ANALYSIS]</scope>
</reference>
<reference key="10">
    <citation type="journal article" date="2008" name="Mol. Cell. Proteomics">
        <title>A multidimensional chromatography technology for in-depth phosphoproteome analysis.</title>
        <authorList>
            <person name="Albuquerque C.P."/>
            <person name="Smolka M.B."/>
            <person name="Payne S.H."/>
            <person name="Bafna V."/>
            <person name="Eng J."/>
            <person name="Zhou H."/>
        </authorList>
    </citation>
    <scope>PHOSPHORYLATION [LARGE SCALE ANALYSIS] AT SER-176</scope>
    <scope>IDENTIFICATION BY MASS SPECTROMETRY [LARGE SCALE ANALYSIS]</scope>
</reference>
<gene>
    <name type="primary">NOP16</name>
    <name type="ordered locus">YER002W</name>
</gene>
<comment type="function">
    <text evidence="3">Involved in the biogenesis of the 60S ribosomal subunit.</text>
</comment>
<comment type="subunit">
    <text evidence="1">Component of the pre-66S ribosomal particle. Interacts with NOP7, RRP1 and RRP15 (By similarity).</text>
</comment>
<comment type="interaction">
    <interactant intactId="EBI-22439">
        <id>P40007</id>
    </interactant>
    <interactant intactId="EBI-6289">
        <id>P36049</id>
        <label>EBP2</label>
    </interactant>
    <organismsDiffer>false</organismsDiffer>
    <experiments>3</experiments>
</comment>
<comment type="interaction">
    <interactant intactId="EBI-22439">
        <id>P40007</id>
    </interactant>
    <interactant intactId="EBI-22906">
        <id>P43586</id>
        <label>LOC1</label>
    </interactant>
    <organismsDiffer>false</organismsDiffer>
    <experiments>3</experiments>
</comment>
<comment type="interaction">
    <interactant intactId="EBI-22439">
        <id>P40007</id>
    </interactant>
    <interactant intactId="EBI-10944">
        <id>Q12176</id>
        <label>MAK21</label>
    </interactant>
    <organismsDiffer>false</organismsDiffer>
    <experiments>3</experiments>
</comment>
<comment type="interaction">
    <interactant intactId="EBI-22439">
        <id>P40007</id>
    </interactant>
    <interactant intactId="EBI-12122">
        <id>P37838</id>
        <label>NOP4</label>
    </interactant>
    <organismsDiffer>false</organismsDiffer>
    <experiments>3</experiments>
</comment>
<comment type="subcellular location">
    <subcellularLocation>
        <location evidence="4">Nucleus</location>
        <location evidence="4">Nucleolus</location>
    </subcellularLocation>
</comment>
<comment type="miscellaneous">
    <text evidence="5">Present with 2860 molecules/cell in log phase SD medium.</text>
</comment>
<comment type="similarity">
    <text evidence="6">Belongs to the NOP16 family.</text>
</comment>
<name>NOP16_YEAST</name>
<feature type="chain" id="PRO_0000202619" description="Nucleolar protein 16">
    <location>
        <begin position="1"/>
        <end position="231"/>
    </location>
</feature>
<feature type="region of interest" description="Disordered" evidence="2">
    <location>
        <begin position="1"/>
        <end position="30"/>
    </location>
</feature>
<feature type="region of interest" description="Disordered" evidence="2">
    <location>
        <begin position="77"/>
        <end position="120"/>
    </location>
</feature>
<feature type="compositionally biased region" description="Basic residues" evidence="2">
    <location>
        <begin position="1"/>
        <end position="10"/>
    </location>
</feature>
<feature type="compositionally biased region" description="Basic residues" evidence="2">
    <location>
        <begin position="17"/>
        <end position="27"/>
    </location>
</feature>
<feature type="compositionally biased region" description="Acidic residues" evidence="2">
    <location>
        <begin position="85"/>
        <end position="98"/>
    </location>
</feature>
<feature type="modified residue" description="Phosphoserine" evidence="7 8">
    <location>
        <position position="176"/>
    </location>
</feature>
<feature type="modified residue" description="Phosphoserine" evidence="7">
    <location>
        <position position="178"/>
    </location>
</feature>
<feature type="helix" evidence="9">
    <location>
        <begin position="4"/>
        <end position="11"/>
    </location>
</feature>
<feature type="strand" evidence="9">
    <location>
        <begin position="12"/>
        <end position="14"/>
    </location>
</feature>
<feature type="turn" evidence="9">
    <location>
        <begin position="24"/>
        <end position="26"/>
    </location>
</feature>
<feature type="helix" evidence="9">
    <location>
        <begin position="34"/>
        <end position="38"/>
    </location>
</feature>
<feature type="helix" evidence="9">
    <location>
        <begin position="46"/>
        <end position="53"/>
    </location>
</feature>
<feature type="helix" evidence="9">
    <location>
        <begin position="158"/>
        <end position="166"/>
    </location>
</feature>
<feature type="helix" evidence="10">
    <location>
        <begin position="179"/>
        <end position="192"/>
    </location>
</feature>
<feature type="helix" evidence="10">
    <location>
        <begin position="196"/>
        <end position="200"/>
    </location>
</feature>
<feature type="turn" evidence="10">
    <location>
        <begin position="203"/>
        <end position="205"/>
    </location>
</feature>
<feature type="helix" evidence="10">
    <location>
        <begin position="212"/>
        <end position="226"/>
    </location>
</feature>
<accession>P40007</accession>
<accession>D3DLP8</accession>
<protein>
    <recommendedName>
        <fullName>Nucleolar protein 16</fullName>
    </recommendedName>
</protein>
<evidence type="ECO:0000250" key="1"/>
<evidence type="ECO:0000256" key="2">
    <source>
        <dbReference type="SAM" id="MobiDB-lite"/>
    </source>
</evidence>
<evidence type="ECO:0000269" key="3">
    <source>
    </source>
</evidence>
<evidence type="ECO:0000269" key="4">
    <source>
    </source>
</evidence>
<evidence type="ECO:0000269" key="5">
    <source>
    </source>
</evidence>
<evidence type="ECO:0000305" key="6"/>
<evidence type="ECO:0007744" key="7">
    <source>
    </source>
</evidence>
<evidence type="ECO:0007744" key="8">
    <source>
    </source>
</evidence>
<evidence type="ECO:0007829" key="9">
    <source>
        <dbReference type="PDB" id="6EM3"/>
    </source>
</evidence>
<evidence type="ECO:0007829" key="10">
    <source>
        <dbReference type="PDB" id="7R6Q"/>
    </source>
</evidence>
<sequence>MTSVRKRKMNRSSVGKATRRNKDKQRKINIQSNPIIAANWDYSLTMAQNYKKLGLRAKLQTPAGGKEADLSKVVKRIPLTKPVLDEDEDEDEGEDEQNDYNAATVELDENEIPEGGARIQRDKNGDVVRVVYGKKKNFDADEDVNEIKARDTTEETEVVKKLEELASRPVIRKERSQSEREEEWLEKLYKKHGDDYKKMFFDKKLNIYQQSEGDLKRRLLRWKKRNGIASK</sequence>
<keyword id="KW-0002">3D-structure</keyword>
<keyword id="KW-0539">Nucleus</keyword>
<keyword id="KW-0597">Phosphoprotein</keyword>
<keyword id="KW-1185">Reference proteome</keyword>
<keyword id="KW-0687">Ribonucleoprotein</keyword>
<keyword id="KW-0690">Ribosome biogenesis</keyword>
<keyword id="KW-0698">rRNA processing</keyword>
<dbReference type="EMBL" id="U18778">
    <property type="protein sequence ID" value="AAB64535.1"/>
    <property type="molecule type" value="Genomic_DNA"/>
</dbReference>
<dbReference type="EMBL" id="AY557812">
    <property type="protein sequence ID" value="AAS56138.1"/>
    <property type="molecule type" value="Genomic_DNA"/>
</dbReference>
<dbReference type="EMBL" id="BK006939">
    <property type="protein sequence ID" value="DAA07652.1"/>
    <property type="molecule type" value="Genomic_DNA"/>
</dbReference>
<dbReference type="PIR" id="S50460">
    <property type="entry name" value="S50460"/>
</dbReference>
<dbReference type="RefSeq" id="NP_010917.3">
    <property type="nucleotide sequence ID" value="NM_001178893.3"/>
</dbReference>
<dbReference type="PDB" id="6C0F">
    <property type="method" value="EM"/>
    <property type="resolution" value="3.70 A"/>
    <property type="chains" value="7=1-231"/>
</dbReference>
<dbReference type="PDB" id="6CB1">
    <property type="method" value="EM"/>
    <property type="resolution" value="4.60 A"/>
    <property type="chains" value="7=1-231"/>
</dbReference>
<dbReference type="PDB" id="6ELZ">
    <property type="method" value="EM"/>
    <property type="resolution" value="3.30 A"/>
    <property type="chains" value="v=1-231"/>
</dbReference>
<dbReference type="PDB" id="6EM1">
    <property type="method" value="EM"/>
    <property type="resolution" value="3.60 A"/>
    <property type="chains" value="v=1-231"/>
</dbReference>
<dbReference type="PDB" id="6EM3">
    <property type="method" value="EM"/>
    <property type="resolution" value="3.20 A"/>
    <property type="chains" value="v=1-231"/>
</dbReference>
<dbReference type="PDB" id="6EM4">
    <property type="method" value="EM"/>
    <property type="resolution" value="4.10 A"/>
    <property type="chains" value="v=1-231"/>
</dbReference>
<dbReference type="PDB" id="6EM5">
    <property type="method" value="EM"/>
    <property type="resolution" value="4.30 A"/>
    <property type="chains" value="v=1-231"/>
</dbReference>
<dbReference type="PDB" id="7NAC">
    <property type="method" value="EM"/>
    <property type="resolution" value="3.04 A"/>
    <property type="chains" value="v=1-231"/>
</dbReference>
<dbReference type="PDB" id="7OHP">
    <property type="method" value="EM"/>
    <property type="resolution" value="3.90 A"/>
    <property type="chains" value="v=1-231"/>
</dbReference>
<dbReference type="PDB" id="7OHR">
    <property type="method" value="EM"/>
    <property type="resolution" value="4.72 A"/>
    <property type="chains" value="v=1-231"/>
</dbReference>
<dbReference type="PDB" id="7OHS">
    <property type="method" value="EM"/>
    <property type="resolution" value="4.38 A"/>
    <property type="chains" value="v=1-231"/>
</dbReference>
<dbReference type="PDB" id="7OHV">
    <property type="method" value="EM"/>
    <property type="resolution" value="3.90 A"/>
    <property type="chains" value="v=1-231"/>
</dbReference>
<dbReference type="PDB" id="7OHW">
    <property type="method" value="EM"/>
    <property type="resolution" value="3.50 A"/>
    <property type="chains" value="v=1-231"/>
</dbReference>
<dbReference type="PDB" id="7OHX">
    <property type="method" value="EM"/>
    <property type="resolution" value="3.30 A"/>
    <property type="chains" value="v=1-231"/>
</dbReference>
<dbReference type="PDB" id="7R6Q">
    <property type="method" value="EM"/>
    <property type="resolution" value="2.98 A"/>
    <property type="chains" value="v=1-231"/>
</dbReference>
<dbReference type="PDB" id="7R7A">
    <property type="method" value="EM"/>
    <property type="resolution" value="3.04 A"/>
    <property type="chains" value="v=1-231"/>
</dbReference>
<dbReference type="PDB" id="8V83">
    <property type="method" value="EM"/>
    <property type="resolution" value="2.53 A"/>
    <property type="chains" value="v=1-231"/>
</dbReference>
<dbReference type="PDB" id="8V84">
    <property type="method" value="EM"/>
    <property type="resolution" value="2.70 A"/>
    <property type="chains" value="v=1-231"/>
</dbReference>
<dbReference type="PDB" id="8V87">
    <property type="method" value="EM"/>
    <property type="resolution" value="2.66 A"/>
    <property type="chains" value="v=1-231"/>
</dbReference>
<dbReference type="PDBsum" id="6C0F"/>
<dbReference type="PDBsum" id="6CB1"/>
<dbReference type="PDBsum" id="6ELZ"/>
<dbReference type="PDBsum" id="6EM1"/>
<dbReference type="PDBsum" id="6EM3"/>
<dbReference type="PDBsum" id="6EM4"/>
<dbReference type="PDBsum" id="6EM5"/>
<dbReference type="PDBsum" id="7NAC"/>
<dbReference type="PDBsum" id="7OHP"/>
<dbReference type="PDBsum" id="7OHR"/>
<dbReference type="PDBsum" id="7OHS"/>
<dbReference type="PDBsum" id="7OHV"/>
<dbReference type="PDBsum" id="7OHW"/>
<dbReference type="PDBsum" id="7OHX"/>
<dbReference type="PDBsum" id="7R6Q"/>
<dbReference type="PDBsum" id="7R7A"/>
<dbReference type="PDBsum" id="8V83"/>
<dbReference type="PDBsum" id="8V84"/>
<dbReference type="PDBsum" id="8V87"/>
<dbReference type="EMDB" id="EMD-12904"/>
<dbReference type="EMDB" id="EMD-12906"/>
<dbReference type="EMDB" id="EMD-12907"/>
<dbReference type="EMDB" id="EMD-12910"/>
<dbReference type="EMDB" id="EMD-12911"/>
<dbReference type="EMDB" id="EMD-12912"/>
<dbReference type="EMDB" id="EMD-24269"/>
<dbReference type="EMDB" id="EMD-24286"/>
<dbReference type="EMDB" id="EMD-24296"/>
<dbReference type="EMDB" id="EMD-43017"/>
<dbReference type="EMDB" id="EMD-43021"/>
<dbReference type="EMDB" id="EMD-43027"/>
<dbReference type="EMDB" id="EMD-7324"/>
<dbReference type="EMDB" id="EMD-7445"/>
<dbReference type="SMR" id="P40007"/>
<dbReference type="BioGRID" id="36732">
    <property type="interactions" value="186"/>
</dbReference>
<dbReference type="DIP" id="DIP-6555N"/>
<dbReference type="FunCoup" id="P40007">
    <property type="interactions" value="365"/>
</dbReference>
<dbReference type="IntAct" id="P40007">
    <property type="interactions" value="51"/>
</dbReference>
<dbReference type="MINT" id="P40007"/>
<dbReference type="STRING" id="4932.YER002W"/>
<dbReference type="iPTMnet" id="P40007"/>
<dbReference type="PaxDb" id="4932-YER002W"/>
<dbReference type="PeptideAtlas" id="P40007"/>
<dbReference type="EnsemblFungi" id="YER002W_mRNA">
    <property type="protein sequence ID" value="YER002W"/>
    <property type="gene ID" value="YER002W"/>
</dbReference>
<dbReference type="GeneID" id="856719"/>
<dbReference type="KEGG" id="sce:YER002W"/>
<dbReference type="AGR" id="SGD:S000000804"/>
<dbReference type="SGD" id="S000000804">
    <property type="gene designation" value="NOP16"/>
</dbReference>
<dbReference type="VEuPathDB" id="FungiDB:YER002W"/>
<dbReference type="eggNOG" id="KOG4771">
    <property type="taxonomic scope" value="Eukaryota"/>
</dbReference>
<dbReference type="GeneTree" id="ENSGT00390000003426"/>
<dbReference type="HOGENOM" id="CLU_078857_0_0_1"/>
<dbReference type="InParanoid" id="P40007"/>
<dbReference type="OMA" id="MQQTEAD"/>
<dbReference type="OrthoDB" id="285729at2759"/>
<dbReference type="BioCyc" id="YEAST:G3O-30190-MONOMER"/>
<dbReference type="BioGRID-ORCS" id="856719">
    <property type="hits" value="3 hits in 10 CRISPR screens"/>
</dbReference>
<dbReference type="PRO" id="PR:P40007"/>
<dbReference type="Proteomes" id="UP000002311">
    <property type="component" value="Chromosome V"/>
</dbReference>
<dbReference type="RNAct" id="P40007">
    <property type="molecule type" value="protein"/>
</dbReference>
<dbReference type="GO" id="GO:0005730">
    <property type="term" value="C:nucleolus"/>
    <property type="evidence" value="ECO:0000314"/>
    <property type="project" value="SGD"/>
</dbReference>
<dbReference type="GO" id="GO:0005634">
    <property type="term" value="C:nucleus"/>
    <property type="evidence" value="ECO:0000314"/>
    <property type="project" value="SGD"/>
</dbReference>
<dbReference type="GO" id="GO:0030687">
    <property type="term" value="C:preribosome, large subunit precursor"/>
    <property type="evidence" value="ECO:0000314"/>
    <property type="project" value="SGD"/>
</dbReference>
<dbReference type="GO" id="GO:0042273">
    <property type="term" value="P:ribosomal large subunit biogenesis"/>
    <property type="evidence" value="ECO:0000315"/>
    <property type="project" value="SGD"/>
</dbReference>
<dbReference type="GO" id="GO:0006364">
    <property type="term" value="P:rRNA processing"/>
    <property type="evidence" value="ECO:0007669"/>
    <property type="project" value="UniProtKB-KW"/>
</dbReference>
<dbReference type="InterPro" id="IPR019002">
    <property type="entry name" value="Ribosome_biogenesis_Nop16"/>
</dbReference>
<dbReference type="PANTHER" id="PTHR13243">
    <property type="entry name" value="HSPC111 PROTEIN-RELATED"/>
    <property type="match status" value="1"/>
</dbReference>
<dbReference type="PANTHER" id="PTHR13243:SF1">
    <property type="entry name" value="NUCLEOLAR PROTEIN 16"/>
    <property type="match status" value="1"/>
</dbReference>
<dbReference type="Pfam" id="PF09420">
    <property type="entry name" value="Nop16"/>
    <property type="match status" value="1"/>
</dbReference>
<proteinExistence type="evidence at protein level"/>
<organism>
    <name type="scientific">Saccharomyces cerevisiae (strain ATCC 204508 / S288c)</name>
    <name type="common">Baker's yeast</name>
    <dbReference type="NCBI Taxonomy" id="559292"/>
    <lineage>
        <taxon>Eukaryota</taxon>
        <taxon>Fungi</taxon>
        <taxon>Dikarya</taxon>
        <taxon>Ascomycota</taxon>
        <taxon>Saccharomycotina</taxon>
        <taxon>Saccharomycetes</taxon>
        <taxon>Saccharomycetales</taxon>
        <taxon>Saccharomycetaceae</taxon>
        <taxon>Saccharomyces</taxon>
    </lineage>
</organism>